<sequence length="318" mass="36587">MSQPLNSNPEVLLRKRRNADRTRLEKQELAKKRKEQEEKQKRSKKNRFVRAETIVATTLATEREKTRIRRVRDLENQKVKNDLSHIPSDRDFILRISEREAGSKATSESELQDVDEEDEEDDGLIREKIVYDGEPSLLFVIRVKGPTAVKIPAKAYKVLSLLRLVELNTGVFIKLTKDVYPLLKLVSPYIVIGQPSLASIRSLIQKRSRIMWQRPEDKEPKEIILNDNNIVEEKLGDEGVICIEDIIHEISTLGENFSKCTFFLLPFKLNREVSGFGAISRLNKLKMREQNKKTRQISNAATAPVIQVDIDSMISKLN</sequence>
<dbReference type="EMBL" id="CR382124">
    <property type="protein sequence ID" value="CAH00373.1"/>
    <property type="molecule type" value="Genomic_DNA"/>
</dbReference>
<dbReference type="EMBL" id="X65545">
    <property type="protein sequence ID" value="CAA46513.1"/>
    <property type="molecule type" value="Genomic_DNA"/>
</dbReference>
<dbReference type="PIR" id="S25368">
    <property type="entry name" value="S25368"/>
</dbReference>
<dbReference type="RefSeq" id="XP_453277.1">
    <property type="nucleotide sequence ID" value="XM_453277.1"/>
</dbReference>
<dbReference type="SMR" id="P32102"/>
<dbReference type="FunCoup" id="P32102">
    <property type="interactions" value="411"/>
</dbReference>
<dbReference type="STRING" id="284590.P32102"/>
<dbReference type="PaxDb" id="284590-P32102"/>
<dbReference type="KEGG" id="kla:KLLA0_D04884g"/>
<dbReference type="eggNOG" id="KOG3184">
    <property type="taxonomic scope" value="Eukaryota"/>
</dbReference>
<dbReference type="HOGENOM" id="CLU_055156_1_0_1"/>
<dbReference type="InParanoid" id="P32102"/>
<dbReference type="OMA" id="VNGWGPQ"/>
<dbReference type="Proteomes" id="UP000000598">
    <property type="component" value="Chromosome D"/>
</dbReference>
<dbReference type="GO" id="GO:0022625">
    <property type="term" value="C:cytosolic large ribosomal subunit"/>
    <property type="evidence" value="ECO:0007669"/>
    <property type="project" value="TreeGrafter"/>
</dbReference>
<dbReference type="GO" id="GO:0005730">
    <property type="term" value="C:nucleolus"/>
    <property type="evidence" value="ECO:0007669"/>
    <property type="project" value="UniProtKB-SubCell"/>
</dbReference>
<dbReference type="GO" id="GO:0003723">
    <property type="term" value="F:RNA binding"/>
    <property type="evidence" value="ECO:0007669"/>
    <property type="project" value="UniProtKB-KW"/>
</dbReference>
<dbReference type="GO" id="GO:0003735">
    <property type="term" value="F:structural constituent of ribosome"/>
    <property type="evidence" value="ECO:0007669"/>
    <property type="project" value="TreeGrafter"/>
</dbReference>
<dbReference type="GO" id="GO:0000463">
    <property type="term" value="P:maturation of LSU-rRNA from tricistronic rRNA transcript (SSU-rRNA, 5.8S rRNA, LSU-rRNA)"/>
    <property type="evidence" value="ECO:0007669"/>
    <property type="project" value="TreeGrafter"/>
</dbReference>
<dbReference type="CDD" id="cd01657">
    <property type="entry name" value="Ribosomal_L7_archeal_euk"/>
    <property type="match status" value="1"/>
</dbReference>
<dbReference type="Gene3D" id="3.30.1390.20">
    <property type="entry name" value="Ribosomal protein L30, ferredoxin-like fold domain"/>
    <property type="match status" value="1"/>
</dbReference>
<dbReference type="InterPro" id="IPR036919">
    <property type="entry name" value="Ribo_uL30_ferredoxin-like_sf"/>
</dbReference>
<dbReference type="InterPro" id="IPR039699">
    <property type="entry name" value="Ribosomal_uL30"/>
</dbReference>
<dbReference type="InterPro" id="IPR018038">
    <property type="entry name" value="Ribosomal_uL30_CS"/>
</dbReference>
<dbReference type="InterPro" id="IPR035808">
    <property type="entry name" value="Ribosomal_uL30_euk_arc"/>
</dbReference>
<dbReference type="InterPro" id="IPR016082">
    <property type="entry name" value="Ribosomal_uL30_ferredoxin-like"/>
</dbReference>
<dbReference type="PANTHER" id="PTHR11524">
    <property type="entry name" value="60S RIBOSOMAL PROTEIN L7"/>
    <property type="match status" value="1"/>
</dbReference>
<dbReference type="PANTHER" id="PTHR11524:SF26">
    <property type="entry name" value="RIBOSOME BIOGENESIS PROTEIN RLP7"/>
    <property type="match status" value="1"/>
</dbReference>
<dbReference type="Pfam" id="PF00327">
    <property type="entry name" value="Ribosomal_L30"/>
    <property type="match status" value="1"/>
</dbReference>
<dbReference type="SUPFAM" id="SSF55129">
    <property type="entry name" value="Ribosomal protein L30p/L7e"/>
    <property type="match status" value="1"/>
</dbReference>
<dbReference type="PROSITE" id="PS00634">
    <property type="entry name" value="RIBOSOMAL_L30"/>
    <property type="match status" value="1"/>
</dbReference>
<keyword id="KW-0539">Nucleus</keyword>
<keyword id="KW-1185">Reference proteome</keyword>
<keyword id="KW-0690">Ribosome biogenesis</keyword>
<keyword id="KW-0694">RNA-binding</keyword>
<proteinExistence type="inferred from homology"/>
<reference key="1">
    <citation type="journal article" date="2004" name="Nature">
        <title>Genome evolution in yeasts.</title>
        <authorList>
            <person name="Dujon B."/>
            <person name="Sherman D."/>
            <person name="Fischer G."/>
            <person name="Durrens P."/>
            <person name="Casaregola S."/>
            <person name="Lafontaine I."/>
            <person name="de Montigny J."/>
            <person name="Marck C."/>
            <person name="Neuveglise C."/>
            <person name="Talla E."/>
            <person name="Goffard N."/>
            <person name="Frangeul L."/>
            <person name="Aigle M."/>
            <person name="Anthouard V."/>
            <person name="Babour A."/>
            <person name="Barbe V."/>
            <person name="Barnay S."/>
            <person name="Blanchin S."/>
            <person name="Beckerich J.-M."/>
            <person name="Beyne E."/>
            <person name="Bleykasten C."/>
            <person name="Boisrame A."/>
            <person name="Boyer J."/>
            <person name="Cattolico L."/>
            <person name="Confanioleri F."/>
            <person name="de Daruvar A."/>
            <person name="Despons L."/>
            <person name="Fabre E."/>
            <person name="Fairhead C."/>
            <person name="Ferry-Dumazet H."/>
            <person name="Groppi A."/>
            <person name="Hantraye F."/>
            <person name="Hennequin C."/>
            <person name="Jauniaux N."/>
            <person name="Joyet P."/>
            <person name="Kachouri R."/>
            <person name="Kerrest A."/>
            <person name="Koszul R."/>
            <person name="Lemaire M."/>
            <person name="Lesur I."/>
            <person name="Ma L."/>
            <person name="Muller H."/>
            <person name="Nicaud J.-M."/>
            <person name="Nikolski M."/>
            <person name="Oztas S."/>
            <person name="Ozier-Kalogeropoulos O."/>
            <person name="Pellenz S."/>
            <person name="Potier S."/>
            <person name="Richard G.-F."/>
            <person name="Straub M.-L."/>
            <person name="Suleau A."/>
            <person name="Swennen D."/>
            <person name="Tekaia F."/>
            <person name="Wesolowski-Louvel M."/>
            <person name="Westhof E."/>
            <person name="Wirth B."/>
            <person name="Zeniou-Meyer M."/>
            <person name="Zivanovic Y."/>
            <person name="Bolotin-Fukuhara M."/>
            <person name="Thierry A."/>
            <person name="Bouchier C."/>
            <person name="Caudron B."/>
            <person name="Scarpelli C."/>
            <person name="Gaillardin C."/>
            <person name="Weissenbach J."/>
            <person name="Wincker P."/>
            <person name="Souciet J.-L."/>
        </authorList>
    </citation>
    <scope>NUCLEOTIDE SEQUENCE [LARGE SCALE GENOMIC DNA]</scope>
    <source>
        <strain>ATCC 8585 / CBS 2359 / DSM 70799 / NBRC 1267 / NRRL Y-1140 / WM37</strain>
    </source>
</reference>
<reference key="2">
    <citation type="journal article" date="1992" name="Yeast">
        <title>LEU2 gene homolog in Kluyveromyces lactis.</title>
        <authorList>
            <person name="Zhang Y.-P."/>
            <person name="Chen X.J."/>
            <person name="Li Y.Y."/>
            <person name="Fukuhara H."/>
        </authorList>
    </citation>
    <scope>NUCLEOTIDE SEQUENCE [GENOMIC DNA] OF 136-318</scope>
    <source>
        <strain>ATCC 76492 / CBS 2359/152 / CLIB 210</strain>
    </source>
</reference>
<gene>
    <name type="primary">RLP7</name>
    <name type="ordered locus">KLLA0D04884g</name>
</gene>
<comment type="function">
    <text evidence="1">Involved in the biogenesis of the 60S ribosomal subunit. May act as a specificity factor that binds precursor rRNAs and tethers the enzymes that carry out the early 5' to 3' exonucleolytic reactions that generate the mature rRNAs (By similarity).</text>
</comment>
<comment type="subcellular location">
    <subcellularLocation>
        <location evidence="1">Nucleus</location>
        <location evidence="1">Nucleolus</location>
    </subcellularLocation>
</comment>
<comment type="similarity">
    <text evidence="3">Belongs to the universal ribosomal protein uL30 family.</text>
</comment>
<feature type="chain" id="PRO_0000104656" description="Ribosome biogenesis protein RLP7">
    <location>
        <begin position="1"/>
        <end position="318"/>
    </location>
</feature>
<feature type="region of interest" description="Disordered" evidence="2">
    <location>
        <begin position="1"/>
        <end position="49"/>
    </location>
</feature>
<feature type="region of interest" description="Disordered" evidence="2">
    <location>
        <begin position="101"/>
        <end position="121"/>
    </location>
</feature>
<feature type="compositionally biased region" description="Basic and acidic residues" evidence="2">
    <location>
        <begin position="19"/>
        <end position="40"/>
    </location>
</feature>
<feature type="compositionally biased region" description="Acidic residues" evidence="2">
    <location>
        <begin position="110"/>
        <end position="121"/>
    </location>
</feature>
<accession>P32102</accession>
<accession>Q6CS12</accession>
<evidence type="ECO:0000250" key="1"/>
<evidence type="ECO:0000256" key="2">
    <source>
        <dbReference type="SAM" id="MobiDB-lite"/>
    </source>
</evidence>
<evidence type="ECO:0000305" key="3"/>
<protein>
    <recommendedName>
        <fullName>Ribosome biogenesis protein RLP7</fullName>
    </recommendedName>
</protein>
<name>RLP7_KLULA</name>
<organism>
    <name type="scientific">Kluyveromyces lactis (strain ATCC 8585 / CBS 2359 / DSM 70799 / NBRC 1267 / NRRL Y-1140 / WM37)</name>
    <name type="common">Yeast</name>
    <name type="synonym">Candida sphaerica</name>
    <dbReference type="NCBI Taxonomy" id="284590"/>
    <lineage>
        <taxon>Eukaryota</taxon>
        <taxon>Fungi</taxon>
        <taxon>Dikarya</taxon>
        <taxon>Ascomycota</taxon>
        <taxon>Saccharomycotina</taxon>
        <taxon>Saccharomycetes</taxon>
        <taxon>Saccharomycetales</taxon>
        <taxon>Saccharomycetaceae</taxon>
        <taxon>Kluyveromyces</taxon>
    </lineage>
</organism>